<keyword id="KW-0067">ATP-binding</keyword>
<keyword id="KW-0119">Carbohydrate metabolism</keyword>
<keyword id="KW-0418">Kinase</keyword>
<keyword id="KW-0448">Lipopolysaccharide biosynthesis</keyword>
<keyword id="KW-0511">Multifunctional enzyme</keyword>
<keyword id="KW-0547">Nucleotide-binding</keyword>
<keyword id="KW-0548">Nucleotidyltransferase</keyword>
<keyword id="KW-1185">Reference proteome</keyword>
<keyword id="KW-0808">Transferase</keyword>
<proteinExistence type="inferred from homology"/>
<comment type="function">
    <text evidence="1">Catalyzes the phosphorylation of D-glycero-D-manno-heptose 7-phosphate at the C-1 position to selectively form D-glycero-beta-D-manno-heptose-1,7-bisphosphate.</text>
</comment>
<comment type="function">
    <text evidence="1">Catalyzes the ADP transfer from ATP to D-glycero-beta-D-manno-heptose 1-phosphate, yielding ADP-D-glycero-beta-D-manno-heptose.</text>
</comment>
<comment type="catalytic activity">
    <reaction evidence="1">
        <text>D-glycero-beta-D-manno-heptose 7-phosphate + ATP = D-glycero-beta-D-manno-heptose 1,7-bisphosphate + ADP + H(+)</text>
        <dbReference type="Rhea" id="RHEA:27473"/>
        <dbReference type="ChEBI" id="CHEBI:15378"/>
        <dbReference type="ChEBI" id="CHEBI:30616"/>
        <dbReference type="ChEBI" id="CHEBI:60204"/>
        <dbReference type="ChEBI" id="CHEBI:60208"/>
        <dbReference type="ChEBI" id="CHEBI:456216"/>
        <dbReference type="EC" id="2.7.1.167"/>
    </reaction>
</comment>
<comment type="catalytic activity">
    <reaction evidence="1">
        <text>D-glycero-beta-D-manno-heptose 1-phosphate + ATP + H(+) = ADP-D-glycero-beta-D-manno-heptose + diphosphate</text>
        <dbReference type="Rhea" id="RHEA:27465"/>
        <dbReference type="ChEBI" id="CHEBI:15378"/>
        <dbReference type="ChEBI" id="CHEBI:30616"/>
        <dbReference type="ChEBI" id="CHEBI:33019"/>
        <dbReference type="ChEBI" id="CHEBI:59967"/>
        <dbReference type="ChEBI" id="CHEBI:61593"/>
        <dbReference type="EC" id="2.7.7.70"/>
    </reaction>
</comment>
<comment type="pathway">
    <text evidence="1">Nucleotide-sugar biosynthesis; ADP-L-glycero-beta-D-manno-heptose biosynthesis; ADP-L-glycero-beta-D-manno-heptose from D-glycero-beta-D-manno-heptose 7-phosphate: step 1/4.</text>
</comment>
<comment type="pathway">
    <text evidence="1">Nucleotide-sugar biosynthesis; ADP-L-glycero-beta-D-manno-heptose biosynthesis; ADP-L-glycero-beta-D-manno-heptose from D-glycero-beta-D-manno-heptose 7-phosphate: step 3/4.</text>
</comment>
<comment type="pathway">
    <text>Bacterial outer membrane biogenesis; LPS core biosynthesis.</text>
</comment>
<comment type="subunit">
    <text evidence="1">Homodimer.</text>
</comment>
<comment type="similarity">
    <text evidence="1">In the N-terminal section; belongs to the carbohydrate kinase PfkB family.</text>
</comment>
<comment type="similarity">
    <text evidence="1">In the C-terminal section; belongs to the cytidylyltransferase family.</text>
</comment>
<reference key="1">
    <citation type="journal article" date="2000" name="Nature">
        <title>Complete genome sequence of Pseudomonas aeruginosa PAO1, an opportunistic pathogen.</title>
        <authorList>
            <person name="Stover C.K."/>
            <person name="Pham X.-Q.T."/>
            <person name="Erwin A.L."/>
            <person name="Mizoguchi S.D."/>
            <person name="Warrener P."/>
            <person name="Hickey M.J."/>
            <person name="Brinkman F.S.L."/>
            <person name="Hufnagle W.O."/>
            <person name="Kowalik D.J."/>
            <person name="Lagrou M."/>
            <person name="Garber R.L."/>
            <person name="Goltry L."/>
            <person name="Tolentino E."/>
            <person name="Westbrock-Wadman S."/>
            <person name="Yuan Y."/>
            <person name="Brody L.L."/>
            <person name="Coulter S.N."/>
            <person name="Folger K.R."/>
            <person name="Kas A."/>
            <person name="Larbig K."/>
            <person name="Lim R.M."/>
            <person name="Smith K.A."/>
            <person name="Spencer D.H."/>
            <person name="Wong G.K.-S."/>
            <person name="Wu Z."/>
            <person name="Paulsen I.T."/>
            <person name="Reizer J."/>
            <person name="Saier M.H. Jr."/>
            <person name="Hancock R.E.W."/>
            <person name="Lory S."/>
            <person name="Olson M.V."/>
        </authorList>
    </citation>
    <scope>NUCLEOTIDE SEQUENCE [LARGE SCALE GENOMIC DNA]</scope>
    <source>
        <strain>ATCC 15692 / DSM 22644 / CIP 104116 / JCM 14847 / LMG 12228 / 1C / PRS 101 / PAO1</strain>
    </source>
</reference>
<dbReference type="EC" id="2.7.1.167" evidence="1"/>
<dbReference type="EC" id="2.7.7.70" evidence="1"/>
<dbReference type="EMBL" id="AE004091">
    <property type="protein sequence ID" value="AAG08381.1"/>
    <property type="molecule type" value="Genomic_DNA"/>
</dbReference>
<dbReference type="PIR" id="A83022">
    <property type="entry name" value="A83022"/>
</dbReference>
<dbReference type="RefSeq" id="NP_253683.1">
    <property type="nucleotide sequence ID" value="NC_002516.2"/>
</dbReference>
<dbReference type="RefSeq" id="WP_003095747.1">
    <property type="nucleotide sequence ID" value="NZ_QZGE01000002.1"/>
</dbReference>
<dbReference type="SMR" id="Q9HUG9"/>
<dbReference type="FunCoup" id="Q9HUG9">
    <property type="interactions" value="348"/>
</dbReference>
<dbReference type="STRING" id="208964.PA4996"/>
<dbReference type="PaxDb" id="208964-PA4996"/>
<dbReference type="GeneID" id="881680"/>
<dbReference type="KEGG" id="pae:PA4996"/>
<dbReference type="PATRIC" id="fig|208964.12.peg.5236"/>
<dbReference type="PseudoCAP" id="PA4996"/>
<dbReference type="HOGENOM" id="CLU_021150_2_1_6"/>
<dbReference type="InParanoid" id="Q9HUG9"/>
<dbReference type="OrthoDB" id="9802794at2"/>
<dbReference type="PhylomeDB" id="Q9HUG9"/>
<dbReference type="BioCyc" id="PAER208964:G1FZ6-5112-MONOMER"/>
<dbReference type="UniPathway" id="UPA00356">
    <property type="reaction ID" value="UER00437"/>
</dbReference>
<dbReference type="UniPathway" id="UPA00356">
    <property type="reaction ID" value="UER00439"/>
</dbReference>
<dbReference type="UniPathway" id="UPA00958"/>
<dbReference type="Proteomes" id="UP000002438">
    <property type="component" value="Chromosome"/>
</dbReference>
<dbReference type="GO" id="GO:0005829">
    <property type="term" value="C:cytosol"/>
    <property type="evidence" value="ECO:0000318"/>
    <property type="project" value="GO_Central"/>
</dbReference>
<dbReference type="GO" id="GO:0005524">
    <property type="term" value="F:ATP binding"/>
    <property type="evidence" value="ECO:0007669"/>
    <property type="project" value="UniProtKB-UniRule"/>
</dbReference>
<dbReference type="GO" id="GO:0033785">
    <property type="term" value="F:heptose 7-phosphate kinase activity"/>
    <property type="evidence" value="ECO:0000318"/>
    <property type="project" value="GO_Central"/>
</dbReference>
<dbReference type="GO" id="GO:0033786">
    <property type="term" value="F:heptose-1-phosphate adenylyltransferase activity"/>
    <property type="evidence" value="ECO:0000318"/>
    <property type="project" value="GO_Central"/>
</dbReference>
<dbReference type="GO" id="GO:0016773">
    <property type="term" value="F:phosphotransferase activity, alcohol group as acceptor"/>
    <property type="evidence" value="ECO:0007669"/>
    <property type="project" value="InterPro"/>
</dbReference>
<dbReference type="GO" id="GO:0097171">
    <property type="term" value="P:ADP-L-glycero-beta-D-manno-heptose biosynthetic process"/>
    <property type="evidence" value="ECO:0007669"/>
    <property type="project" value="UniProtKB-UniPathway"/>
</dbReference>
<dbReference type="GO" id="GO:0009244">
    <property type="term" value="P:lipopolysaccharide core region biosynthetic process"/>
    <property type="evidence" value="ECO:0007669"/>
    <property type="project" value="UniProtKB-UniPathway"/>
</dbReference>
<dbReference type="CDD" id="cd01172">
    <property type="entry name" value="RfaE_like"/>
    <property type="match status" value="1"/>
</dbReference>
<dbReference type="FunFam" id="3.40.1190.20:FF:000002">
    <property type="entry name" value="Bifunctional protein HldE"/>
    <property type="match status" value="1"/>
</dbReference>
<dbReference type="FunFam" id="3.40.50.620:FF:000028">
    <property type="entry name" value="Bifunctional protein HldE"/>
    <property type="match status" value="1"/>
</dbReference>
<dbReference type="Gene3D" id="3.40.1190.20">
    <property type="match status" value="1"/>
</dbReference>
<dbReference type="Gene3D" id="3.40.50.620">
    <property type="entry name" value="HUPs"/>
    <property type="match status" value="1"/>
</dbReference>
<dbReference type="HAMAP" id="MF_01603">
    <property type="entry name" value="HldE"/>
    <property type="match status" value="1"/>
</dbReference>
<dbReference type="InterPro" id="IPR023030">
    <property type="entry name" value="Bifunc_HldE"/>
</dbReference>
<dbReference type="InterPro" id="IPR002173">
    <property type="entry name" value="Carboh/pur_kinase_PfkB_CS"/>
</dbReference>
<dbReference type="InterPro" id="IPR004821">
    <property type="entry name" value="Cyt_trans-like"/>
</dbReference>
<dbReference type="InterPro" id="IPR011611">
    <property type="entry name" value="PfkB_dom"/>
</dbReference>
<dbReference type="InterPro" id="IPR011913">
    <property type="entry name" value="RfaE_dom_I"/>
</dbReference>
<dbReference type="InterPro" id="IPR011914">
    <property type="entry name" value="RfaE_dom_II"/>
</dbReference>
<dbReference type="InterPro" id="IPR029056">
    <property type="entry name" value="Ribokinase-like"/>
</dbReference>
<dbReference type="InterPro" id="IPR014729">
    <property type="entry name" value="Rossmann-like_a/b/a_fold"/>
</dbReference>
<dbReference type="NCBIfam" id="TIGR00125">
    <property type="entry name" value="cyt_tran_rel"/>
    <property type="match status" value="1"/>
</dbReference>
<dbReference type="NCBIfam" id="NF008454">
    <property type="entry name" value="PRK11316.1"/>
    <property type="match status" value="1"/>
</dbReference>
<dbReference type="NCBIfam" id="TIGR02198">
    <property type="entry name" value="rfaE_dom_I"/>
    <property type="match status" value="1"/>
</dbReference>
<dbReference type="NCBIfam" id="TIGR02199">
    <property type="entry name" value="rfaE_dom_II"/>
    <property type="match status" value="1"/>
</dbReference>
<dbReference type="PANTHER" id="PTHR46969">
    <property type="entry name" value="BIFUNCTIONAL PROTEIN HLDE"/>
    <property type="match status" value="1"/>
</dbReference>
<dbReference type="PANTHER" id="PTHR46969:SF1">
    <property type="entry name" value="BIFUNCTIONAL PROTEIN HLDE"/>
    <property type="match status" value="1"/>
</dbReference>
<dbReference type="Pfam" id="PF01467">
    <property type="entry name" value="CTP_transf_like"/>
    <property type="match status" value="1"/>
</dbReference>
<dbReference type="Pfam" id="PF00294">
    <property type="entry name" value="PfkB"/>
    <property type="match status" value="1"/>
</dbReference>
<dbReference type="SUPFAM" id="SSF52374">
    <property type="entry name" value="Nucleotidylyl transferase"/>
    <property type="match status" value="1"/>
</dbReference>
<dbReference type="SUPFAM" id="SSF53613">
    <property type="entry name" value="Ribokinase-like"/>
    <property type="match status" value="1"/>
</dbReference>
<dbReference type="PROSITE" id="PS00583">
    <property type="entry name" value="PFKB_KINASES_1"/>
    <property type="match status" value="1"/>
</dbReference>
<organism>
    <name type="scientific">Pseudomonas aeruginosa (strain ATCC 15692 / DSM 22644 / CIP 104116 / JCM 14847 / LMG 12228 / 1C / PRS 101 / PAO1)</name>
    <dbReference type="NCBI Taxonomy" id="208964"/>
    <lineage>
        <taxon>Bacteria</taxon>
        <taxon>Pseudomonadati</taxon>
        <taxon>Pseudomonadota</taxon>
        <taxon>Gammaproteobacteria</taxon>
        <taxon>Pseudomonadales</taxon>
        <taxon>Pseudomonadaceae</taxon>
        <taxon>Pseudomonas</taxon>
    </lineage>
</organism>
<name>HLDE_PSEAE</name>
<gene>
    <name evidence="1" type="primary">hldE</name>
    <name type="synonym">rfaE</name>
    <name type="ordered locus">PA4996</name>
</gene>
<protein>
    <recommendedName>
        <fullName evidence="1">Bifunctional protein HldE</fullName>
    </recommendedName>
    <domain>
        <recommendedName>
            <fullName evidence="1">D-beta-D-heptose 7-phosphate kinase</fullName>
            <ecNumber evidence="1">2.7.1.167</ecNumber>
        </recommendedName>
        <alternativeName>
            <fullName evidence="1">D-beta-D-heptose 7-phosphotransferase</fullName>
        </alternativeName>
        <alternativeName>
            <fullName evidence="1">D-glycero-beta-D-manno-heptose-7-phosphate kinase</fullName>
        </alternativeName>
    </domain>
    <domain>
        <recommendedName>
            <fullName evidence="1">D-beta-D-heptose 1-phosphate adenylyltransferase</fullName>
            <ecNumber evidence="1">2.7.7.70</ecNumber>
        </recommendedName>
        <alternativeName>
            <fullName evidence="1">D-glycero-beta-D-manno-heptose 1-phosphate adenylyltransferase</fullName>
        </alternativeName>
    </domain>
</protein>
<feature type="chain" id="PRO_0000080119" description="Bifunctional protein HldE">
    <location>
        <begin position="1"/>
        <end position="474"/>
    </location>
</feature>
<feature type="region of interest" description="Ribokinase">
    <location>
        <begin position="1"/>
        <end position="318"/>
    </location>
</feature>
<feature type="region of interest" description="Cytidylyltransferase">
    <location>
        <begin position="343"/>
        <end position="474"/>
    </location>
</feature>
<feature type="active site" evidence="1">
    <location>
        <position position="263"/>
    </location>
</feature>
<feature type="binding site" evidence="1">
    <location>
        <begin position="194"/>
        <end position="197"/>
    </location>
    <ligand>
        <name>ATP</name>
        <dbReference type="ChEBI" id="CHEBI:30616"/>
    </ligand>
</feature>
<sequence>MKLSMPRFDQAPVLVVGDVMLDRYWHGATSRISPEAPVPVVRVEQHEDRPGGAANVALNIAALGAQALLVGVTGRDEAADSLANSLKAAGVDARFQRIDSQPTIVKLRVMSRHQQLLRVDFEEPFRTDAAALAVDVESLLAKVKVLVLSDYGKGALQNHQVLIQAARARNIPVLADPKGKDFAIYRGASLITPNLSEFETIVGRCADEAELVAKGQALMSELDLGALLVTRGEHGMTLLRHGQPALHLPARAREVFDVTGAGDTVISTLAAALAAGEELPSAVGLANLAAGIVVGKLGTAAISAPELRRAVQREQGSERGVLGLEQLLLAIEDARAHGEKIVFTNGCFDILHAGHVTYLEQARAQGDRLIVGVNDDASVTRLKGVGRPINSVDRRMAVLAGLGAVDWVVSFAEDTPERLLEQVRPDVLVKGGDYGVEQVVGAQIVKAYGGEVRVLGLVENSSTTAIVEKIRQKG</sequence>
<accession>Q9HUG9</accession>
<evidence type="ECO:0000255" key="1">
    <source>
        <dbReference type="HAMAP-Rule" id="MF_01603"/>
    </source>
</evidence>